<sequence>MGSKSFGNLLDLASGDLLDIPQTPRYLPRVMTVPGIISDVDGYGISDGDSDVISLPCRERKIIVANFLPLNGKKDSETGKWKFSLDNDSPLLHLKDGFSPETEVIYVGSLKTHVDVSEQDEVSHNLFEEFNCVATFLPQDVHKKFYLGFCKQQLWPLFHYMLPMCPDHGERFDRGLWQAYVSANKIFADKVMGVINLEEDYIWIHDYHLMVLPTFLRRRFHRVKLGFFLHSPFPSSEIYRTLPVREELLRGLLNCDLIGFHTFDYARHFLSCCCRMLGLEYESKRGHIALDYLGRTVFLKILPIGIHMGRLESVLNLPATAEKLKEIQEKYRGKKIILGVDDMDIFKGLSLKILAFEHLLQQYPSMLGKIVLIQIVNPARGSGKDVQEARKETYDTVKRINERYGSHDYEPVVLIDRPVPRFEKSAYYALAECCIVNAVRDGMNLVPYKYTVCRQGTPSMNKSLGVSDDLPRTSTLVLSEFIGCSPSLSGAIRVNPWDVDAVADSLYSAITMSDFEKQLRHKKHFHYISTHDVGYWARSFSQDLERASRDHYSKRCWGVGWGLGFRLVALSPNFRRLSIEQTVSAYRRSSKRAIFLDYDGTLVPETSIVKDPSAEVISALKALCSDPNNTIFIVSGRGKVSLSEWLAPCENLGIAAEHGYFTRWNKSSDWETSGLSDDLEWKKVVEPIMRLYTETTDGSNIEAKESALVWHHQDADPDFGSCQAKELLDHLETVLVNEPVIVNRGHQIVEVKPQGVSKGLVTGKILSRMLEDGIAPDFVVCIGDDRSDEEMFENISTTLSAQSSSMSTEIFACTVGRKPSKAKYFLDEVSDVVKLLQGLANTSSPKPRYPSHLRVSFESVV</sequence>
<gene>
    <name type="primary">TPS10</name>
    <name type="synonym">TPS3</name>
    <name type="ordered locus">At1g60140</name>
    <name type="ORF">T13D8.4</name>
</gene>
<evidence type="ECO:0000250" key="1">
    <source>
        <dbReference type="UniProtKB" id="O23617"/>
    </source>
</evidence>
<evidence type="ECO:0000305" key="2"/>
<proteinExistence type="evidence at transcript level"/>
<dbReference type="EC" id="2.4.1.15"/>
<dbReference type="EMBL" id="AF155151">
    <property type="protein sequence ID" value="AAO15312.1"/>
    <property type="molecule type" value="mRNA"/>
</dbReference>
<dbReference type="EMBL" id="AC004473">
    <property type="protein sequence ID" value="AAC24048.1"/>
    <property type="molecule type" value="Genomic_DNA"/>
</dbReference>
<dbReference type="EMBL" id="CP002684">
    <property type="protein sequence ID" value="AEE33662.1"/>
    <property type="molecule type" value="Genomic_DNA"/>
</dbReference>
<dbReference type="EMBL" id="CP002684">
    <property type="protein sequence ID" value="ANM60414.1"/>
    <property type="molecule type" value="Genomic_DNA"/>
</dbReference>
<dbReference type="EMBL" id="CP002684">
    <property type="protein sequence ID" value="ANM60415.1"/>
    <property type="molecule type" value="Genomic_DNA"/>
</dbReference>
<dbReference type="EMBL" id="CP002684">
    <property type="protein sequence ID" value="ANM60417.1"/>
    <property type="molecule type" value="Genomic_DNA"/>
</dbReference>
<dbReference type="EMBL" id="CP002684">
    <property type="protein sequence ID" value="ANM60418.1"/>
    <property type="molecule type" value="Genomic_DNA"/>
</dbReference>
<dbReference type="EMBL" id="AK229191">
    <property type="protein sequence ID" value="BAF01061.1"/>
    <property type="molecule type" value="mRNA"/>
</dbReference>
<dbReference type="PIR" id="T02267">
    <property type="entry name" value="T02267"/>
</dbReference>
<dbReference type="RefSeq" id="NP_001322702.1">
    <property type="nucleotide sequence ID" value="NM_001333886.1"/>
</dbReference>
<dbReference type="RefSeq" id="NP_001322703.1">
    <property type="nucleotide sequence ID" value="NM_001333885.1"/>
</dbReference>
<dbReference type="RefSeq" id="NP_001322705.1">
    <property type="nucleotide sequence ID" value="NM_001333882.1"/>
</dbReference>
<dbReference type="RefSeq" id="NP_001322706.1">
    <property type="nucleotide sequence ID" value="NM_001333884.1"/>
</dbReference>
<dbReference type="RefSeq" id="NP_176221.1">
    <property type="nucleotide sequence ID" value="NM_104705.4"/>
</dbReference>
<dbReference type="SMR" id="O80738"/>
<dbReference type="FunCoup" id="O80738">
    <property type="interactions" value="491"/>
</dbReference>
<dbReference type="IntAct" id="O80738">
    <property type="interactions" value="9"/>
</dbReference>
<dbReference type="STRING" id="3702.O80738"/>
<dbReference type="CAZy" id="GT20">
    <property type="family name" value="Glycosyltransferase Family 20"/>
</dbReference>
<dbReference type="iPTMnet" id="O80738"/>
<dbReference type="PaxDb" id="3702-AT1G60140.1"/>
<dbReference type="ProteomicsDB" id="232493"/>
<dbReference type="EnsemblPlants" id="AT1G60140.1">
    <property type="protein sequence ID" value="AT1G60140.1"/>
    <property type="gene ID" value="AT1G60140"/>
</dbReference>
<dbReference type="EnsemblPlants" id="AT1G60140.2">
    <property type="protein sequence ID" value="AT1G60140.2"/>
    <property type="gene ID" value="AT1G60140"/>
</dbReference>
<dbReference type="EnsemblPlants" id="AT1G60140.4">
    <property type="protein sequence ID" value="AT1G60140.4"/>
    <property type="gene ID" value="AT1G60140"/>
</dbReference>
<dbReference type="EnsemblPlants" id="AT1G60140.5">
    <property type="protein sequence ID" value="AT1G60140.5"/>
    <property type="gene ID" value="AT1G60140"/>
</dbReference>
<dbReference type="EnsemblPlants" id="AT1G60140.6">
    <property type="protein sequence ID" value="AT1G60140.6"/>
    <property type="gene ID" value="AT1G60140"/>
</dbReference>
<dbReference type="GeneID" id="842309"/>
<dbReference type="Gramene" id="AT1G60140.1">
    <property type="protein sequence ID" value="AT1G60140.1"/>
    <property type="gene ID" value="AT1G60140"/>
</dbReference>
<dbReference type="Gramene" id="AT1G60140.2">
    <property type="protein sequence ID" value="AT1G60140.2"/>
    <property type="gene ID" value="AT1G60140"/>
</dbReference>
<dbReference type="Gramene" id="AT1G60140.4">
    <property type="protein sequence ID" value="AT1G60140.4"/>
    <property type="gene ID" value="AT1G60140"/>
</dbReference>
<dbReference type="Gramene" id="AT1G60140.5">
    <property type="protein sequence ID" value="AT1G60140.5"/>
    <property type="gene ID" value="AT1G60140"/>
</dbReference>
<dbReference type="Gramene" id="AT1G60140.6">
    <property type="protein sequence ID" value="AT1G60140.6"/>
    <property type="gene ID" value="AT1G60140"/>
</dbReference>
<dbReference type="KEGG" id="ath:AT1G60140"/>
<dbReference type="Araport" id="AT1G60140"/>
<dbReference type="TAIR" id="AT1G60140">
    <property type="gene designation" value="TPS10"/>
</dbReference>
<dbReference type="eggNOG" id="KOG1050">
    <property type="taxonomic scope" value="Eukaryota"/>
</dbReference>
<dbReference type="HOGENOM" id="CLU_002351_3_1_1"/>
<dbReference type="InParanoid" id="O80738"/>
<dbReference type="PhylomeDB" id="O80738"/>
<dbReference type="PRO" id="PR:O80738"/>
<dbReference type="Proteomes" id="UP000006548">
    <property type="component" value="Chromosome 1"/>
</dbReference>
<dbReference type="ExpressionAtlas" id="O80738">
    <property type="expression patterns" value="baseline and differential"/>
</dbReference>
<dbReference type="GO" id="GO:0016757">
    <property type="term" value="F:glycosyltransferase activity"/>
    <property type="evidence" value="ECO:0007669"/>
    <property type="project" value="UniProtKB-KW"/>
</dbReference>
<dbReference type="GO" id="GO:0005992">
    <property type="term" value="P:trehalose biosynthetic process"/>
    <property type="evidence" value="ECO:0007669"/>
    <property type="project" value="InterPro"/>
</dbReference>
<dbReference type="CDD" id="cd03788">
    <property type="entry name" value="GT20_TPS"/>
    <property type="match status" value="1"/>
</dbReference>
<dbReference type="CDD" id="cd01627">
    <property type="entry name" value="HAD_TPP"/>
    <property type="match status" value="1"/>
</dbReference>
<dbReference type="FunFam" id="3.40.50.2000:FF:000010">
    <property type="entry name" value="Alpha,alpha-trehalose-phosphate synthase"/>
    <property type="match status" value="1"/>
</dbReference>
<dbReference type="FunFam" id="3.40.50.1000:FF:000054">
    <property type="entry name" value="alpha,alpha-trehalose-phosphate synthase [UDP-forming] 6"/>
    <property type="match status" value="1"/>
</dbReference>
<dbReference type="FunFam" id="3.40.50.2000:FF:000017">
    <property type="entry name" value="alpha,alpha-trehalose-phosphate synthase [UDP-forming] 6"/>
    <property type="match status" value="1"/>
</dbReference>
<dbReference type="FunFam" id="3.40.50.1000:FF:000154">
    <property type="entry name" value="Trehalose-6-phosphate synthase 10"/>
    <property type="match status" value="1"/>
</dbReference>
<dbReference type="Gene3D" id="3.40.50.2000">
    <property type="entry name" value="Glycogen Phosphorylase B"/>
    <property type="match status" value="2"/>
</dbReference>
<dbReference type="Gene3D" id="3.40.50.1000">
    <property type="entry name" value="HAD superfamily/HAD-like"/>
    <property type="match status" value="2"/>
</dbReference>
<dbReference type="InterPro" id="IPR001830">
    <property type="entry name" value="Glyco_trans_20"/>
</dbReference>
<dbReference type="InterPro" id="IPR036412">
    <property type="entry name" value="HAD-like_sf"/>
</dbReference>
<dbReference type="InterPro" id="IPR006379">
    <property type="entry name" value="HAD-SF_hydro_IIB"/>
</dbReference>
<dbReference type="InterPro" id="IPR023214">
    <property type="entry name" value="HAD_sf"/>
</dbReference>
<dbReference type="InterPro" id="IPR003337">
    <property type="entry name" value="Trehalose_PPase"/>
</dbReference>
<dbReference type="NCBIfam" id="TIGR01484">
    <property type="entry name" value="HAD-SF-IIB"/>
    <property type="match status" value="1"/>
</dbReference>
<dbReference type="NCBIfam" id="TIGR00685">
    <property type="entry name" value="T6PP"/>
    <property type="match status" value="1"/>
</dbReference>
<dbReference type="PANTHER" id="PTHR10788:SF81">
    <property type="entry name" value="ALPHA,ALPHA-TREHALOSE-PHOSPHATE SYNTHASE [UDP-FORMING] 10-RELATED"/>
    <property type="match status" value="1"/>
</dbReference>
<dbReference type="PANTHER" id="PTHR10788">
    <property type="entry name" value="TREHALOSE-6-PHOSPHATE SYNTHASE"/>
    <property type="match status" value="1"/>
</dbReference>
<dbReference type="Pfam" id="PF00982">
    <property type="entry name" value="Glyco_transf_20"/>
    <property type="match status" value="1"/>
</dbReference>
<dbReference type="Pfam" id="PF02358">
    <property type="entry name" value="Trehalose_PPase"/>
    <property type="match status" value="1"/>
</dbReference>
<dbReference type="SUPFAM" id="SSF56784">
    <property type="entry name" value="HAD-like"/>
    <property type="match status" value="1"/>
</dbReference>
<dbReference type="SUPFAM" id="SSF53756">
    <property type="entry name" value="UDP-Glycosyltransferase/glycogen phosphorylase"/>
    <property type="match status" value="1"/>
</dbReference>
<accession>O80738</accession>
<accession>Q0WP88</accession>
<comment type="catalytic activity">
    <reaction>
        <text>D-glucose 6-phosphate + UDP-alpha-D-glucose = alpha,alpha-trehalose 6-phosphate + UDP + H(+)</text>
        <dbReference type="Rhea" id="RHEA:18889"/>
        <dbReference type="ChEBI" id="CHEBI:15378"/>
        <dbReference type="ChEBI" id="CHEBI:58223"/>
        <dbReference type="ChEBI" id="CHEBI:58429"/>
        <dbReference type="ChEBI" id="CHEBI:58885"/>
        <dbReference type="ChEBI" id="CHEBI:61548"/>
        <dbReference type="EC" id="2.4.1.15"/>
    </reaction>
</comment>
<comment type="similarity">
    <text evidence="2">In the N-terminal section; belongs to the glycosyltransferase 20 family.</text>
</comment>
<comment type="similarity">
    <text evidence="2">In the C-terminal section; belongs to the trehalose phosphatase family.</text>
</comment>
<name>TPS10_ARATH</name>
<reference key="1">
    <citation type="submission" date="1999-05" db="EMBL/GenBank/DDBJ databases">
        <title>Isolation and characterization of Arabidopsis trehalose-6-phosphate synthase.</title>
        <authorList>
            <person name="Kim Y.S."/>
            <person name="Lee E.J."/>
            <person name="Kim J.S."/>
            <person name="Kim C.K."/>
            <person name="Lim D.H."/>
            <person name="Chung C.H."/>
        </authorList>
    </citation>
    <scope>NUCLEOTIDE SEQUENCE [MRNA]</scope>
</reference>
<reference key="2">
    <citation type="journal article" date="2000" name="Nature">
        <title>Sequence and analysis of chromosome 1 of the plant Arabidopsis thaliana.</title>
        <authorList>
            <person name="Theologis A."/>
            <person name="Ecker J.R."/>
            <person name="Palm C.J."/>
            <person name="Federspiel N.A."/>
            <person name="Kaul S."/>
            <person name="White O."/>
            <person name="Alonso J."/>
            <person name="Altafi H."/>
            <person name="Araujo R."/>
            <person name="Bowman C.L."/>
            <person name="Brooks S.Y."/>
            <person name="Buehler E."/>
            <person name="Chan A."/>
            <person name="Chao Q."/>
            <person name="Chen H."/>
            <person name="Cheuk R.F."/>
            <person name="Chin C.W."/>
            <person name="Chung M.K."/>
            <person name="Conn L."/>
            <person name="Conway A.B."/>
            <person name="Conway A.R."/>
            <person name="Creasy T.H."/>
            <person name="Dewar K."/>
            <person name="Dunn P."/>
            <person name="Etgu P."/>
            <person name="Feldblyum T.V."/>
            <person name="Feng J.-D."/>
            <person name="Fong B."/>
            <person name="Fujii C.Y."/>
            <person name="Gill J.E."/>
            <person name="Goldsmith A.D."/>
            <person name="Haas B."/>
            <person name="Hansen N.F."/>
            <person name="Hughes B."/>
            <person name="Huizar L."/>
            <person name="Hunter J.L."/>
            <person name="Jenkins J."/>
            <person name="Johnson-Hopson C."/>
            <person name="Khan S."/>
            <person name="Khaykin E."/>
            <person name="Kim C.J."/>
            <person name="Koo H.L."/>
            <person name="Kremenetskaia I."/>
            <person name="Kurtz D.B."/>
            <person name="Kwan A."/>
            <person name="Lam B."/>
            <person name="Langin-Hooper S."/>
            <person name="Lee A."/>
            <person name="Lee J.M."/>
            <person name="Lenz C.A."/>
            <person name="Li J.H."/>
            <person name="Li Y.-P."/>
            <person name="Lin X."/>
            <person name="Liu S.X."/>
            <person name="Liu Z.A."/>
            <person name="Luros J.S."/>
            <person name="Maiti R."/>
            <person name="Marziali A."/>
            <person name="Militscher J."/>
            <person name="Miranda M."/>
            <person name="Nguyen M."/>
            <person name="Nierman W.C."/>
            <person name="Osborne B.I."/>
            <person name="Pai G."/>
            <person name="Peterson J."/>
            <person name="Pham P.K."/>
            <person name="Rizzo M."/>
            <person name="Rooney T."/>
            <person name="Rowley D."/>
            <person name="Sakano H."/>
            <person name="Salzberg S.L."/>
            <person name="Schwartz J.R."/>
            <person name="Shinn P."/>
            <person name="Southwick A.M."/>
            <person name="Sun H."/>
            <person name="Tallon L.J."/>
            <person name="Tambunga G."/>
            <person name="Toriumi M.J."/>
            <person name="Town C.D."/>
            <person name="Utterback T."/>
            <person name="Van Aken S."/>
            <person name="Vaysberg M."/>
            <person name="Vysotskaia V.S."/>
            <person name="Walker M."/>
            <person name="Wu D."/>
            <person name="Yu G."/>
            <person name="Fraser C.M."/>
            <person name="Venter J.C."/>
            <person name="Davis R.W."/>
        </authorList>
    </citation>
    <scope>NUCLEOTIDE SEQUENCE [LARGE SCALE GENOMIC DNA]</scope>
    <source>
        <strain>cv. Columbia</strain>
    </source>
</reference>
<reference key="3">
    <citation type="journal article" date="2017" name="Plant J.">
        <title>Araport11: a complete reannotation of the Arabidopsis thaliana reference genome.</title>
        <authorList>
            <person name="Cheng C.Y."/>
            <person name="Krishnakumar V."/>
            <person name="Chan A.P."/>
            <person name="Thibaud-Nissen F."/>
            <person name="Schobel S."/>
            <person name="Town C.D."/>
        </authorList>
    </citation>
    <scope>GENOME REANNOTATION</scope>
    <source>
        <strain>cv. Columbia</strain>
    </source>
</reference>
<reference key="4">
    <citation type="submission" date="2006-07" db="EMBL/GenBank/DDBJ databases">
        <title>Large-scale analysis of RIKEN Arabidopsis full-length (RAFL) cDNAs.</title>
        <authorList>
            <person name="Totoki Y."/>
            <person name="Seki M."/>
            <person name="Ishida J."/>
            <person name="Nakajima M."/>
            <person name="Enju A."/>
            <person name="Kamiya A."/>
            <person name="Narusaka M."/>
            <person name="Shin-i T."/>
            <person name="Nakagawa M."/>
            <person name="Sakamoto N."/>
            <person name="Oishi K."/>
            <person name="Kohara Y."/>
            <person name="Kobayashi M."/>
            <person name="Toyoda A."/>
            <person name="Sakaki Y."/>
            <person name="Sakurai T."/>
            <person name="Iida K."/>
            <person name="Akiyama K."/>
            <person name="Satou M."/>
            <person name="Toyoda T."/>
            <person name="Konagaya A."/>
            <person name="Carninci P."/>
            <person name="Kawai J."/>
            <person name="Hayashizaki Y."/>
            <person name="Shinozaki K."/>
        </authorList>
    </citation>
    <scope>NUCLEOTIDE SEQUENCE [LARGE SCALE MRNA]</scope>
    <source>
        <strain>cv. Columbia</strain>
    </source>
</reference>
<protein>
    <recommendedName>
        <fullName>Probable alpha,alpha-trehalose-phosphate synthase [UDP-forming] 10</fullName>
        <ecNumber>2.4.1.15</ecNumber>
    </recommendedName>
    <alternativeName>
        <fullName>Trehalose-6-phosphate synthase 10</fullName>
        <shortName>AtTPS10</shortName>
    </alternativeName>
</protein>
<feature type="chain" id="PRO_0000324831" description="Probable alpha,alpha-trehalose-phosphate synthase [UDP-forming] 10">
    <location>
        <begin position="1"/>
        <end position="861"/>
    </location>
</feature>
<feature type="region of interest" description="Glycosyltransferase">
    <location>
        <begin position="59"/>
        <end position="546"/>
    </location>
</feature>
<feature type="modified residue" description="Phosphoserine" evidence="1">
    <location>
        <position position="5"/>
    </location>
</feature>
<feature type="modified residue" description="Phosphothreonine" evidence="1">
    <location>
        <position position="32"/>
    </location>
</feature>
<feature type="sequence conflict" description="In Ref. 4; BAF01061." evidence="2" ref="4">
    <original>V</original>
    <variation>E</variation>
    <location>
        <position position="412"/>
    </location>
</feature>
<keyword id="KW-0328">Glycosyltransferase</keyword>
<keyword id="KW-0597">Phosphoprotein</keyword>
<keyword id="KW-1185">Reference proteome</keyword>
<keyword id="KW-0808">Transferase</keyword>
<organism>
    <name type="scientific">Arabidopsis thaliana</name>
    <name type="common">Mouse-ear cress</name>
    <dbReference type="NCBI Taxonomy" id="3702"/>
    <lineage>
        <taxon>Eukaryota</taxon>
        <taxon>Viridiplantae</taxon>
        <taxon>Streptophyta</taxon>
        <taxon>Embryophyta</taxon>
        <taxon>Tracheophyta</taxon>
        <taxon>Spermatophyta</taxon>
        <taxon>Magnoliopsida</taxon>
        <taxon>eudicotyledons</taxon>
        <taxon>Gunneridae</taxon>
        <taxon>Pentapetalae</taxon>
        <taxon>rosids</taxon>
        <taxon>malvids</taxon>
        <taxon>Brassicales</taxon>
        <taxon>Brassicaceae</taxon>
        <taxon>Camelineae</taxon>
        <taxon>Arabidopsis</taxon>
    </lineage>
</organism>